<name>RLME_HAEIN</name>
<keyword id="KW-0963">Cytoplasm</keyword>
<keyword id="KW-0489">Methyltransferase</keyword>
<keyword id="KW-1185">Reference proteome</keyword>
<keyword id="KW-0698">rRNA processing</keyword>
<keyword id="KW-0949">S-adenosyl-L-methionine</keyword>
<keyword id="KW-0808">Transferase</keyword>
<organism>
    <name type="scientific">Haemophilus influenzae (strain ATCC 51907 / DSM 11121 / KW20 / Rd)</name>
    <dbReference type="NCBI Taxonomy" id="71421"/>
    <lineage>
        <taxon>Bacteria</taxon>
        <taxon>Pseudomonadati</taxon>
        <taxon>Pseudomonadota</taxon>
        <taxon>Gammaproteobacteria</taxon>
        <taxon>Pasteurellales</taxon>
        <taxon>Pasteurellaceae</taxon>
        <taxon>Haemophilus</taxon>
    </lineage>
</organism>
<accession>P45162</accession>
<dbReference type="EC" id="2.1.1.166" evidence="1"/>
<dbReference type="EMBL" id="L42023">
    <property type="protein sequence ID" value="AAC22978.1"/>
    <property type="molecule type" value="Genomic_DNA"/>
</dbReference>
<dbReference type="PIR" id="C64117">
    <property type="entry name" value="C64117"/>
</dbReference>
<dbReference type="RefSeq" id="NP_439485.1">
    <property type="nucleotide sequence ID" value="NC_000907.1"/>
</dbReference>
<dbReference type="SMR" id="P45162"/>
<dbReference type="STRING" id="71421.HI_1334"/>
<dbReference type="EnsemblBacteria" id="AAC22978">
    <property type="protein sequence ID" value="AAC22978"/>
    <property type="gene ID" value="HI_1334"/>
</dbReference>
<dbReference type="KEGG" id="hin:HI_1334"/>
<dbReference type="PATRIC" id="fig|71421.8.peg.1386"/>
<dbReference type="eggNOG" id="COG0293">
    <property type="taxonomic scope" value="Bacteria"/>
</dbReference>
<dbReference type="HOGENOM" id="CLU_009422_4_0_6"/>
<dbReference type="OrthoDB" id="9790080at2"/>
<dbReference type="PhylomeDB" id="P45162"/>
<dbReference type="BioCyc" id="HINF71421:G1GJ1-1358-MONOMER"/>
<dbReference type="Proteomes" id="UP000000579">
    <property type="component" value="Chromosome"/>
</dbReference>
<dbReference type="GO" id="GO:0005737">
    <property type="term" value="C:cytoplasm"/>
    <property type="evidence" value="ECO:0007669"/>
    <property type="project" value="UniProtKB-SubCell"/>
</dbReference>
<dbReference type="GO" id="GO:0008650">
    <property type="term" value="F:rRNA (uridine-2'-O-)-methyltransferase activity"/>
    <property type="evidence" value="ECO:0000318"/>
    <property type="project" value="GO_Central"/>
</dbReference>
<dbReference type="GO" id="GO:0001510">
    <property type="term" value="P:RNA methylation"/>
    <property type="evidence" value="ECO:0000318"/>
    <property type="project" value="GO_Central"/>
</dbReference>
<dbReference type="FunFam" id="3.40.50.150:FF:000005">
    <property type="entry name" value="Ribosomal RNA large subunit methyltransferase E"/>
    <property type="match status" value="1"/>
</dbReference>
<dbReference type="Gene3D" id="3.40.50.150">
    <property type="entry name" value="Vaccinia Virus protein VP39"/>
    <property type="match status" value="1"/>
</dbReference>
<dbReference type="HAMAP" id="MF_01547">
    <property type="entry name" value="RNA_methyltr_E"/>
    <property type="match status" value="1"/>
</dbReference>
<dbReference type="InterPro" id="IPR050082">
    <property type="entry name" value="RNA_methyltr_RlmE"/>
</dbReference>
<dbReference type="InterPro" id="IPR002877">
    <property type="entry name" value="RNA_MeTrfase_FtsJ_dom"/>
</dbReference>
<dbReference type="InterPro" id="IPR015507">
    <property type="entry name" value="rRNA-MeTfrase_E"/>
</dbReference>
<dbReference type="InterPro" id="IPR004512">
    <property type="entry name" value="rRNA_MeTrfase_gammaproteobac"/>
</dbReference>
<dbReference type="InterPro" id="IPR029063">
    <property type="entry name" value="SAM-dependent_MTases_sf"/>
</dbReference>
<dbReference type="NCBIfam" id="NF008390">
    <property type="entry name" value="PRK11188.1"/>
    <property type="match status" value="1"/>
</dbReference>
<dbReference type="NCBIfam" id="TIGR00438">
    <property type="entry name" value="rrmJ"/>
    <property type="match status" value="1"/>
</dbReference>
<dbReference type="PANTHER" id="PTHR10920">
    <property type="entry name" value="RIBOSOMAL RNA METHYLTRANSFERASE"/>
    <property type="match status" value="1"/>
</dbReference>
<dbReference type="PANTHER" id="PTHR10920:SF18">
    <property type="entry name" value="RRNA METHYLTRANSFERASE 2, MITOCHONDRIAL"/>
    <property type="match status" value="1"/>
</dbReference>
<dbReference type="Pfam" id="PF01728">
    <property type="entry name" value="FtsJ"/>
    <property type="match status" value="1"/>
</dbReference>
<dbReference type="PIRSF" id="PIRSF005461">
    <property type="entry name" value="23S_rRNA_mtase"/>
    <property type="match status" value="1"/>
</dbReference>
<dbReference type="SUPFAM" id="SSF53335">
    <property type="entry name" value="S-adenosyl-L-methionine-dependent methyltransferases"/>
    <property type="match status" value="1"/>
</dbReference>
<feature type="chain" id="PRO_0000155503" description="Ribosomal RNA large subunit methyltransferase E">
    <location>
        <begin position="1"/>
        <end position="209"/>
    </location>
</feature>
<feature type="domain" description="TRAM" evidence="1">
    <location>
        <begin position="191"/>
        <end position="209"/>
    </location>
</feature>
<feature type="active site" description="Proton acceptor" evidence="1">
    <location>
        <position position="164"/>
    </location>
</feature>
<feature type="binding site" evidence="1">
    <location>
        <position position="63"/>
    </location>
    <ligand>
        <name>S-adenosyl-L-methionine</name>
        <dbReference type="ChEBI" id="CHEBI:59789"/>
    </ligand>
</feature>
<feature type="binding site" evidence="1">
    <location>
        <position position="65"/>
    </location>
    <ligand>
        <name>S-adenosyl-L-methionine</name>
        <dbReference type="ChEBI" id="CHEBI:59789"/>
    </ligand>
</feature>
<feature type="binding site" evidence="1">
    <location>
        <position position="83"/>
    </location>
    <ligand>
        <name>S-adenosyl-L-methionine</name>
        <dbReference type="ChEBI" id="CHEBI:59789"/>
    </ligand>
</feature>
<feature type="binding site" evidence="1">
    <location>
        <position position="99"/>
    </location>
    <ligand>
        <name>S-adenosyl-L-methionine</name>
        <dbReference type="ChEBI" id="CHEBI:59789"/>
    </ligand>
</feature>
<feature type="binding site" evidence="1">
    <location>
        <position position="124"/>
    </location>
    <ligand>
        <name>S-adenosyl-L-methionine</name>
        <dbReference type="ChEBI" id="CHEBI:59789"/>
    </ligand>
</feature>
<reference key="1">
    <citation type="journal article" date="1995" name="Science">
        <title>Whole-genome random sequencing and assembly of Haemophilus influenzae Rd.</title>
        <authorList>
            <person name="Fleischmann R.D."/>
            <person name="Adams M.D."/>
            <person name="White O."/>
            <person name="Clayton R.A."/>
            <person name="Kirkness E.F."/>
            <person name="Kerlavage A.R."/>
            <person name="Bult C.J."/>
            <person name="Tomb J.-F."/>
            <person name="Dougherty B.A."/>
            <person name="Merrick J.M."/>
            <person name="McKenney K."/>
            <person name="Sutton G.G."/>
            <person name="FitzHugh W."/>
            <person name="Fields C.A."/>
            <person name="Gocayne J.D."/>
            <person name="Scott J.D."/>
            <person name="Shirley R."/>
            <person name="Liu L.-I."/>
            <person name="Glodek A."/>
            <person name="Kelley J.M."/>
            <person name="Weidman J.F."/>
            <person name="Phillips C.A."/>
            <person name="Spriggs T."/>
            <person name="Hedblom E."/>
            <person name="Cotton M.D."/>
            <person name="Utterback T.R."/>
            <person name="Hanna M.C."/>
            <person name="Nguyen D.T."/>
            <person name="Saudek D.M."/>
            <person name="Brandon R.C."/>
            <person name="Fine L.D."/>
            <person name="Fritchman J.L."/>
            <person name="Fuhrmann J.L."/>
            <person name="Geoghagen N.S.M."/>
            <person name="Gnehm C.L."/>
            <person name="McDonald L.A."/>
            <person name="Small K.V."/>
            <person name="Fraser C.M."/>
            <person name="Smith H.O."/>
            <person name="Venter J.C."/>
        </authorList>
    </citation>
    <scope>NUCLEOTIDE SEQUENCE [LARGE SCALE GENOMIC DNA]</scope>
    <source>
        <strain>ATCC 51907 / DSM 11121 / KW20 / Rd</strain>
    </source>
</reference>
<sequence length="209" mass="23408">MGKKKRSASSSRWLNEHFSDQFVQKAHKQKLRSRAYFKIDEIQQTDKLFKQGMTVVDLGAAPGGWSQYVVSQIGGKGRVIACDILEMDPIVGVDFLQGDFRDENVLNALLARVGEDKVDVVMSDMAPNFSGMPSVDIPRAMYLVELALDMCKQVLASKGSFVVKVFQGEGFDEYLREIRSLFDVVKVRKPEASRGRSREVYIVATGYKG</sequence>
<evidence type="ECO:0000255" key="1">
    <source>
        <dbReference type="HAMAP-Rule" id="MF_01547"/>
    </source>
</evidence>
<proteinExistence type="inferred from homology"/>
<protein>
    <recommendedName>
        <fullName evidence="1">Ribosomal RNA large subunit methyltransferase E</fullName>
        <ecNumber evidence="1">2.1.1.166</ecNumber>
    </recommendedName>
    <alternativeName>
        <fullName evidence="1">23S rRNA Um2552 methyltransferase</fullName>
    </alternativeName>
    <alternativeName>
        <fullName evidence="1">rRNA (uridine-2'-O-)-methyltransferase</fullName>
    </alternativeName>
</protein>
<gene>
    <name evidence="1" type="primary">rlmE</name>
    <name evidence="1" type="synonym">ftsJ</name>
    <name evidence="1" type="synonym">rrmJ</name>
    <name type="ordered locus">HI_1334</name>
</gene>
<comment type="function">
    <text evidence="1">Specifically methylates the uridine in position 2552 of 23S rRNA at the 2'-O position of the ribose in the fully assembled 50S ribosomal subunit.</text>
</comment>
<comment type="catalytic activity">
    <reaction evidence="1">
        <text>uridine(2552) in 23S rRNA + S-adenosyl-L-methionine = 2'-O-methyluridine(2552) in 23S rRNA + S-adenosyl-L-homocysteine + H(+)</text>
        <dbReference type="Rhea" id="RHEA:42720"/>
        <dbReference type="Rhea" id="RHEA-COMP:10202"/>
        <dbReference type="Rhea" id="RHEA-COMP:10203"/>
        <dbReference type="ChEBI" id="CHEBI:15378"/>
        <dbReference type="ChEBI" id="CHEBI:57856"/>
        <dbReference type="ChEBI" id="CHEBI:59789"/>
        <dbReference type="ChEBI" id="CHEBI:65315"/>
        <dbReference type="ChEBI" id="CHEBI:74478"/>
        <dbReference type="EC" id="2.1.1.166"/>
    </reaction>
</comment>
<comment type="subcellular location">
    <subcellularLocation>
        <location evidence="1">Cytoplasm</location>
    </subcellularLocation>
</comment>
<comment type="similarity">
    <text evidence="1">Belongs to the class I-like SAM-binding methyltransferase superfamily. RNA methyltransferase RlmE family.</text>
</comment>